<protein>
    <recommendedName>
        <fullName evidence="1">ATP synthase gamma chain</fullName>
    </recommendedName>
    <alternativeName>
        <fullName evidence="1">ATP synthase F1 sector gamma subunit</fullName>
    </alternativeName>
    <alternativeName>
        <fullName evidence="1">F-ATPase gamma subunit</fullName>
    </alternativeName>
</protein>
<comment type="function">
    <text evidence="1">Produces ATP from ADP in the presence of a proton gradient across the membrane. The gamma chain is believed to be important in regulating ATPase activity and the flow of protons through the CF(0) complex.</text>
</comment>
<comment type="subunit">
    <text evidence="1">F-type ATPases have 2 components, CF(1) - the catalytic core - and CF(0) - the membrane proton channel. CF(1) has five subunits: alpha(3), beta(3), gamma(1), delta(1), epsilon(1). CF(0) has three main subunits: a, b and c.</text>
</comment>
<comment type="subcellular location">
    <subcellularLocation>
        <location evidence="1">Cell inner membrane</location>
        <topology evidence="1">Peripheral membrane protein</topology>
    </subcellularLocation>
</comment>
<comment type="similarity">
    <text evidence="1">Belongs to the ATPase gamma chain family.</text>
</comment>
<gene>
    <name evidence="1" type="primary">atpG</name>
    <name type="ordered locus">BB4606</name>
</gene>
<feature type="chain" id="PRO_0000073245" description="ATP synthase gamma chain">
    <location>
        <begin position="1"/>
        <end position="301"/>
    </location>
</feature>
<dbReference type="EMBL" id="BX640451">
    <property type="protein sequence ID" value="CAE34968.1"/>
    <property type="molecule type" value="Genomic_DNA"/>
</dbReference>
<dbReference type="RefSeq" id="WP_003815344.1">
    <property type="nucleotide sequence ID" value="NC_002927.3"/>
</dbReference>
<dbReference type="SMR" id="Q7WEM8"/>
<dbReference type="GeneID" id="56476895"/>
<dbReference type="KEGG" id="bbr:BB4606"/>
<dbReference type="eggNOG" id="COG0224">
    <property type="taxonomic scope" value="Bacteria"/>
</dbReference>
<dbReference type="HOGENOM" id="CLU_050669_0_1_4"/>
<dbReference type="Proteomes" id="UP000001027">
    <property type="component" value="Chromosome"/>
</dbReference>
<dbReference type="GO" id="GO:0005886">
    <property type="term" value="C:plasma membrane"/>
    <property type="evidence" value="ECO:0007669"/>
    <property type="project" value="UniProtKB-SubCell"/>
</dbReference>
<dbReference type="GO" id="GO:0045259">
    <property type="term" value="C:proton-transporting ATP synthase complex"/>
    <property type="evidence" value="ECO:0007669"/>
    <property type="project" value="UniProtKB-KW"/>
</dbReference>
<dbReference type="GO" id="GO:0005524">
    <property type="term" value="F:ATP binding"/>
    <property type="evidence" value="ECO:0007669"/>
    <property type="project" value="UniProtKB-UniRule"/>
</dbReference>
<dbReference type="GO" id="GO:0046933">
    <property type="term" value="F:proton-transporting ATP synthase activity, rotational mechanism"/>
    <property type="evidence" value="ECO:0007669"/>
    <property type="project" value="UniProtKB-UniRule"/>
</dbReference>
<dbReference type="GO" id="GO:0042777">
    <property type="term" value="P:proton motive force-driven plasma membrane ATP synthesis"/>
    <property type="evidence" value="ECO:0007669"/>
    <property type="project" value="UniProtKB-UniRule"/>
</dbReference>
<dbReference type="CDD" id="cd12151">
    <property type="entry name" value="F1-ATPase_gamma"/>
    <property type="match status" value="1"/>
</dbReference>
<dbReference type="FunFam" id="1.10.287.80:FF:000005">
    <property type="entry name" value="ATP synthase gamma chain"/>
    <property type="match status" value="1"/>
</dbReference>
<dbReference type="Gene3D" id="3.40.1380.10">
    <property type="match status" value="1"/>
</dbReference>
<dbReference type="Gene3D" id="1.10.287.80">
    <property type="entry name" value="ATP synthase, gamma subunit, helix hairpin domain"/>
    <property type="match status" value="2"/>
</dbReference>
<dbReference type="HAMAP" id="MF_00815">
    <property type="entry name" value="ATP_synth_gamma_bact"/>
    <property type="match status" value="1"/>
</dbReference>
<dbReference type="InterPro" id="IPR035968">
    <property type="entry name" value="ATP_synth_F1_ATPase_gsu"/>
</dbReference>
<dbReference type="InterPro" id="IPR000131">
    <property type="entry name" value="ATP_synth_F1_gsu"/>
</dbReference>
<dbReference type="InterPro" id="IPR023632">
    <property type="entry name" value="ATP_synth_F1_gsu_CS"/>
</dbReference>
<dbReference type="NCBIfam" id="TIGR01146">
    <property type="entry name" value="ATPsyn_F1gamma"/>
    <property type="match status" value="1"/>
</dbReference>
<dbReference type="NCBIfam" id="NF004144">
    <property type="entry name" value="PRK05621.1-1"/>
    <property type="match status" value="1"/>
</dbReference>
<dbReference type="PANTHER" id="PTHR11693">
    <property type="entry name" value="ATP SYNTHASE GAMMA CHAIN"/>
    <property type="match status" value="1"/>
</dbReference>
<dbReference type="PANTHER" id="PTHR11693:SF22">
    <property type="entry name" value="ATP SYNTHASE SUBUNIT GAMMA, MITOCHONDRIAL"/>
    <property type="match status" value="1"/>
</dbReference>
<dbReference type="Pfam" id="PF00231">
    <property type="entry name" value="ATP-synt"/>
    <property type="match status" value="1"/>
</dbReference>
<dbReference type="PRINTS" id="PR00126">
    <property type="entry name" value="ATPASEGAMMA"/>
</dbReference>
<dbReference type="SUPFAM" id="SSF52943">
    <property type="entry name" value="ATP synthase (F1-ATPase), gamma subunit"/>
    <property type="match status" value="1"/>
</dbReference>
<dbReference type="PROSITE" id="PS00153">
    <property type="entry name" value="ATPASE_GAMMA"/>
    <property type="match status" value="1"/>
</dbReference>
<accession>Q7WEM8</accession>
<name>ATPG_BORBR</name>
<keyword id="KW-0066">ATP synthesis</keyword>
<keyword id="KW-0997">Cell inner membrane</keyword>
<keyword id="KW-1003">Cell membrane</keyword>
<keyword id="KW-0139">CF(1)</keyword>
<keyword id="KW-0375">Hydrogen ion transport</keyword>
<keyword id="KW-0406">Ion transport</keyword>
<keyword id="KW-0472">Membrane</keyword>
<keyword id="KW-0813">Transport</keyword>
<proteinExistence type="inferred from homology"/>
<sequence>MPGIKEIRTKIKSVQNTRKITKAMEMVAASKMRKAQERMRAGRPYATKVREIAAHLMQANPEYSHPYLVEREVKAVGVVLVTTDKGLCGGLNTNISRVTLSKLKEFEQRSIKVQATAFGNKGLGLLTRIGAKLVSQEVQLGDKPDLDRLLGAIKVQLDDYLEGRIDALYVATTRFVNTMRQEPVFLRLLPLSNGLDDPFQSGVETLAKTAEIKSDYSWDYIYEPDAKSVIDDLLQRYVEGLLYQAVAENMASEQSARMVAMKSASDNAKKVIGDLQLVYNKTRQAAITKEISEIVGGAAAV</sequence>
<organism>
    <name type="scientific">Bordetella bronchiseptica (strain ATCC BAA-588 / NCTC 13252 / RB50)</name>
    <name type="common">Alcaligenes bronchisepticus</name>
    <dbReference type="NCBI Taxonomy" id="257310"/>
    <lineage>
        <taxon>Bacteria</taxon>
        <taxon>Pseudomonadati</taxon>
        <taxon>Pseudomonadota</taxon>
        <taxon>Betaproteobacteria</taxon>
        <taxon>Burkholderiales</taxon>
        <taxon>Alcaligenaceae</taxon>
        <taxon>Bordetella</taxon>
    </lineage>
</organism>
<evidence type="ECO:0000255" key="1">
    <source>
        <dbReference type="HAMAP-Rule" id="MF_00815"/>
    </source>
</evidence>
<reference key="1">
    <citation type="journal article" date="2003" name="Nat. Genet.">
        <title>Comparative analysis of the genome sequences of Bordetella pertussis, Bordetella parapertussis and Bordetella bronchiseptica.</title>
        <authorList>
            <person name="Parkhill J."/>
            <person name="Sebaihia M."/>
            <person name="Preston A."/>
            <person name="Murphy L.D."/>
            <person name="Thomson N.R."/>
            <person name="Harris D.E."/>
            <person name="Holden M.T.G."/>
            <person name="Churcher C.M."/>
            <person name="Bentley S.D."/>
            <person name="Mungall K.L."/>
            <person name="Cerdeno-Tarraga A.-M."/>
            <person name="Temple L."/>
            <person name="James K.D."/>
            <person name="Harris B."/>
            <person name="Quail M.A."/>
            <person name="Achtman M."/>
            <person name="Atkin R."/>
            <person name="Baker S."/>
            <person name="Basham D."/>
            <person name="Bason N."/>
            <person name="Cherevach I."/>
            <person name="Chillingworth T."/>
            <person name="Collins M."/>
            <person name="Cronin A."/>
            <person name="Davis P."/>
            <person name="Doggett J."/>
            <person name="Feltwell T."/>
            <person name="Goble A."/>
            <person name="Hamlin N."/>
            <person name="Hauser H."/>
            <person name="Holroyd S."/>
            <person name="Jagels K."/>
            <person name="Leather S."/>
            <person name="Moule S."/>
            <person name="Norberczak H."/>
            <person name="O'Neil S."/>
            <person name="Ormond D."/>
            <person name="Price C."/>
            <person name="Rabbinowitsch E."/>
            <person name="Rutter S."/>
            <person name="Sanders M."/>
            <person name="Saunders D."/>
            <person name="Seeger K."/>
            <person name="Sharp S."/>
            <person name="Simmonds M."/>
            <person name="Skelton J."/>
            <person name="Squares R."/>
            <person name="Squares S."/>
            <person name="Stevens K."/>
            <person name="Unwin L."/>
            <person name="Whitehead S."/>
            <person name="Barrell B.G."/>
            <person name="Maskell D.J."/>
        </authorList>
    </citation>
    <scope>NUCLEOTIDE SEQUENCE [LARGE SCALE GENOMIC DNA]</scope>
    <source>
        <strain>ATCC BAA-588 / NCTC 13252 / RB50</strain>
    </source>
</reference>